<dbReference type="EMBL" id="L42023">
    <property type="protein sequence ID" value="AAC23123.1"/>
    <property type="molecule type" value="Genomic_DNA"/>
</dbReference>
<dbReference type="PIR" id="A64031">
    <property type="entry name" value="A64031"/>
</dbReference>
<dbReference type="RefSeq" id="NP_439627.1">
    <property type="nucleotide sequence ID" value="NC_000907.1"/>
</dbReference>
<dbReference type="STRING" id="71421.HI_1476"/>
<dbReference type="DNASU" id="950582"/>
<dbReference type="EnsemblBacteria" id="AAC23123">
    <property type="protein sequence ID" value="AAC23123"/>
    <property type="gene ID" value="HI_1476"/>
</dbReference>
<dbReference type="KEGG" id="hin:HI_1476"/>
<dbReference type="PATRIC" id="fig|71421.8.peg.1544"/>
<dbReference type="eggNOG" id="COG2932">
    <property type="taxonomic scope" value="Bacteria"/>
</dbReference>
<dbReference type="HOGENOM" id="CLU_066192_1_2_6"/>
<dbReference type="OrthoDB" id="5959816at2"/>
<dbReference type="PhylomeDB" id="P44207"/>
<dbReference type="BioCyc" id="HINF71421:G1GJ1-1501-MONOMER"/>
<dbReference type="Proteomes" id="UP000000579">
    <property type="component" value="Chromosome"/>
</dbReference>
<dbReference type="GO" id="GO:0003677">
    <property type="term" value="F:DNA binding"/>
    <property type="evidence" value="ECO:0007669"/>
    <property type="project" value="UniProtKB-KW"/>
</dbReference>
<dbReference type="CDD" id="cd00093">
    <property type="entry name" value="HTH_XRE"/>
    <property type="match status" value="1"/>
</dbReference>
<dbReference type="CDD" id="cd06529">
    <property type="entry name" value="S24_LexA-like"/>
    <property type="match status" value="1"/>
</dbReference>
<dbReference type="Gene3D" id="1.10.260.40">
    <property type="entry name" value="lambda repressor-like DNA-binding domains"/>
    <property type="match status" value="1"/>
</dbReference>
<dbReference type="Gene3D" id="2.10.109.10">
    <property type="entry name" value="Umud Fragment, subunit A"/>
    <property type="match status" value="1"/>
</dbReference>
<dbReference type="InterPro" id="IPR001387">
    <property type="entry name" value="Cro/C1-type_HTH"/>
</dbReference>
<dbReference type="InterPro" id="IPR010982">
    <property type="entry name" value="Lambda_DNA-bd_dom_sf"/>
</dbReference>
<dbReference type="InterPro" id="IPR039418">
    <property type="entry name" value="LexA-like"/>
</dbReference>
<dbReference type="InterPro" id="IPR036286">
    <property type="entry name" value="LexA/Signal_pep-like_sf"/>
</dbReference>
<dbReference type="InterPro" id="IPR015927">
    <property type="entry name" value="Peptidase_S24_S26A/B/C"/>
</dbReference>
<dbReference type="PANTHER" id="PTHR40661">
    <property type="match status" value="1"/>
</dbReference>
<dbReference type="PANTHER" id="PTHR40661:SF3">
    <property type="entry name" value="FELS-1 PROPHAGE TRANSCRIPTIONAL REGULATOR"/>
    <property type="match status" value="1"/>
</dbReference>
<dbReference type="Pfam" id="PF01381">
    <property type="entry name" value="HTH_3"/>
    <property type="match status" value="1"/>
</dbReference>
<dbReference type="Pfam" id="PF00717">
    <property type="entry name" value="Peptidase_S24"/>
    <property type="match status" value="1"/>
</dbReference>
<dbReference type="SMART" id="SM00530">
    <property type="entry name" value="HTH_XRE"/>
    <property type="match status" value="1"/>
</dbReference>
<dbReference type="SUPFAM" id="SSF47413">
    <property type="entry name" value="lambda repressor-like DNA-binding domains"/>
    <property type="match status" value="1"/>
</dbReference>
<dbReference type="SUPFAM" id="SSF51306">
    <property type="entry name" value="LexA/Signal peptidase"/>
    <property type="match status" value="1"/>
</dbReference>
<dbReference type="PROSITE" id="PS50943">
    <property type="entry name" value="HTH_CROC1"/>
    <property type="match status" value="1"/>
</dbReference>
<evidence type="ECO:0000255" key="1">
    <source>
        <dbReference type="PROSITE-ProRule" id="PRU00257"/>
    </source>
</evidence>
<gene>
    <name type="ordered locus">HI_1476</name>
</gene>
<protein>
    <recommendedName>
        <fullName>Uncharacterized HTH-type transcriptional regulator HI_1476</fullName>
    </recommendedName>
</protein>
<keyword id="KW-0238">DNA-binding</keyword>
<keyword id="KW-1185">Reference proteome</keyword>
<keyword id="KW-0804">Transcription</keyword>
<keyword id="KW-0805">Transcription regulation</keyword>
<proteinExistence type="evidence at protein level"/>
<accession>P44207</accession>
<organism>
    <name type="scientific">Haemophilus influenzae (strain ATCC 51907 / DSM 11121 / KW20 / Rd)</name>
    <dbReference type="NCBI Taxonomy" id="71421"/>
    <lineage>
        <taxon>Bacteria</taxon>
        <taxon>Pseudomonadati</taxon>
        <taxon>Pseudomonadota</taxon>
        <taxon>Gammaproteobacteria</taxon>
        <taxon>Pasteurellales</taxon>
        <taxon>Pasteurellaceae</taxon>
        <taxon>Haemophilus</taxon>
    </lineage>
</organism>
<reference key="1">
    <citation type="journal article" date="1995" name="Science">
        <title>Whole-genome random sequencing and assembly of Haemophilus influenzae Rd.</title>
        <authorList>
            <person name="Fleischmann R.D."/>
            <person name="Adams M.D."/>
            <person name="White O."/>
            <person name="Clayton R.A."/>
            <person name="Kirkness E.F."/>
            <person name="Kerlavage A.R."/>
            <person name="Bult C.J."/>
            <person name="Tomb J.-F."/>
            <person name="Dougherty B.A."/>
            <person name="Merrick J.M."/>
            <person name="McKenney K."/>
            <person name="Sutton G.G."/>
            <person name="FitzHugh W."/>
            <person name="Fields C.A."/>
            <person name="Gocayne J.D."/>
            <person name="Scott J.D."/>
            <person name="Shirley R."/>
            <person name="Liu L.-I."/>
            <person name="Glodek A."/>
            <person name="Kelley J.M."/>
            <person name="Weidman J.F."/>
            <person name="Phillips C.A."/>
            <person name="Spriggs T."/>
            <person name="Hedblom E."/>
            <person name="Cotton M.D."/>
            <person name="Utterback T.R."/>
            <person name="Hanna M.C."/>
            <person name="Nguyen D.T."/>
            <person name="Saudek D.M."/>
            <person name="Brandon R.C."/>
            <person name="Fine L.D."/>
            <person name="Fritchman J.L."/>
            <person name="Fuhrmann J.L."/>
            <person name="Geoghagen N.S.M."/>
            <person name="Gnehm C.L."/>
            <person name="McDonald L.A."/>
            <person name="Small K.V."/>
            <person name="Fraser C.M."/>
            <person name="Smith H.O."/>
            <person name="Venter J.C."/>
        </authorList>
    </citation>
    <scope>NUCLEOTIDE SEQUENCE [LARGE SCALE GENOMIC DNA]</scope>
    <source>
        <strain>ATCC 51907 / DSM 11121 / KW20 / Rd</strain>
    </source>
</reference>
<reference key="2">
    <citation type="journal article" date="2000" name="Electrophoresis">
        <title>Two-dimensional map of the proteome of Haemophilus influenzae.</title>
        <authorList>
            <person name="Langen H."/>
            <person name="Takacs B."/>
            <person name="Evers S."/>
            <person name="Berndt P."/>
            <person name="Lahm H.W."/>
            <person name="Wipf B."/>
            <person name="Gray C."/>
            <person name="Fountoulakis M."/>
        </authorList>
    </citation>
    <scope>IDENTIFICATION BY MASS SPECTROMETRY</scope>
    <source>
        <strain>ATCC 51907 / DSM 11121 / KW20 / Rd</strain>
    </source>
</reference>
<name>Y1476_HAEIN</name>
<sequence>MQYQNQDNFPERIEYLVDKLNGPSEFARKTGVTLSTITRWRKGEADPSRSNLVKIAEVTGVSIEWLATGKIKEEKTTEEKPAGSLVSRAFERMQAMLEEGVSMIDSYSSINVSAGFGSFNEGITQPDGQEPYSDELLTSLGVKADNCAVFWANGNSMLPTINNYDQMLVDLSRKEIQGDRIYLVQNGESVWVKRVKMEWDGISLISDNKEEYPPISITGENAQNLQIIGQVVHIGHSLI</sequence>
<feature type="chain" id="PRO_0000149771" description="Uncharacterized HTH-type transcriptional regulator HI_1476">
    <location>
        <begin position="1"/>
        <end position="239"/>
    </location>
</feature>
<feature type="domain" description="HTH cro/C1-type" evidence="1">
    <location>
        <begin position="13"/>
        <end position="66"/>
    </location>
</feature>
<feature type="DNA-binding region" description="H-T-H motif" evidence="1">
    <location>
        <begin position="24"/>
        <end position="43"/>
    </location>
</feature>